<name>PTN1_RAT</name>
<dbReference type="EC" id="3.1.3.48"/>
<dbReference type="EMBL" id="M33962">
    <property type="protein sequence ID" value="AAC79516.1"/>
    <property type="molecule type" value="mRNA"/>
</dbReference>
<dbReference type="EMBL" id="BC081829">
    <property type="protein sequence ID" value="AAH81829.1"/>
    <property type="molecule type" value="mRNA"/>
</dbReference>
<dbReference type="PIR" id="A34845">
    <property type="entry name" value="A34845"/>
</dbReference>
<dbReference type="RefSeq" id="NP_036769.1">
    <property type="nucleotide sequence ID" value="NM_012637.2"/>
</dbReference>
<dbReference type="SMR" id="P20417"/>
<dbReference type="BioGRID" id="246828">
    <property type="interactions" value="1"/>
</dbReference>
<dbReference type="CORUM" id="P20417"/>
<dbReference type="FunCoup" id="P20417">
    <property type="interactions" value="3117"/>
</dbReference>
<dbReference type="IntAct" id="P20417">
    <property type="interactions" value="3"/>
</dbReference>
<dbReference type="MINT" id="P20417"/>
<dbReference type="STRING" id="10116.ENSRNOP00000014309"/>
<dbReference type="BindingDB" id="P20417"/>
<dbReference type="ChEMBL" id="CHEMBL2371"/>
<dbReference type="iPTMnet" id="P20417"/>
<dbReference type="PhosphoSitePlus" id="P20417"/>
<dbReference type="PaxDb" id="10116-ENSRNOP00000014309"/>
<dbReference type="Ensembl" id="ENSRNOT00000014309.5">
    <property type="protein sequence ID" value="ENSRNOP00000014309.2"/>
    <property type="gene ID" value="ENSRNOG00000010574.5"/>
</dbReference>
<dbReference type="GeneID" id="24697"/>
<dbReference type="KEGG" id="rno:24697"/>
<dbReference type="UCSC" id="RGD:61965">
    <property type="organism name" value="rat"/>
</dbReference>
<dbReference type="AGR" id="RGD:61965"/>
<dbReference type="CTD" id="5770"/>
<dbReference type="RGD" id="61965">
    <property type="gene designation" value="Ptpn1"/>
</dbReference>
<dbReference type="eggNOG" id="KOG0789">
    <property type="taxonomic scope" value="Eukaryota"/>
</dbReference>
<dbReference type="GeneTree" id="ENSGT00940000158041"/>
<dbReference type="HOGENOM" id="CLU_001645_9_0_1"/>
<dbReference type="InParanoid" id="P20417"/>
<dbReference type="OMA" id="EFWEIDE"/>
<dbReference type="OrthoDB" id="9450131at2759"/>
<dbReference type="PhylomeDB" id="P20417"/>
<dbReference type="Reactome" id="R-RNO-354192">
    <property type="pathway name" value="Integrin signaling"/>
</dbReference>
<dbReference type="Reactome" id="R-RNO-6807004">
    <property type="pathway name" value="Negative regulation of MET activity"/>
</dbReference>
<dbReference type="Reactome" id="R-RNO-77387">
    <property type="pathway name" value="Insulin receptor recycling"/>
</dbReference>
<dbReference type="Reactome" id="R-RNO-8849472">
    <property type="pathway name" value="PTK6 Down-Regulation"/>
</dbReference>
<dbReference type="Reactome" id="R-RNO-912694">
    <property type="pathway name" value="Regulation of IFNA/IFNB signaling"/>
</dbReference>
<dbReference type="Reactome" id="R-RNO-982772">
    <property type="pathway name" value="Growth hormone receptor signaling"/>
</dbReference>
<dbReference type="Reactome" id="R-RNO-9860927">
    <property type="pathway name" value="Turbulent (oscillatory, disturbed) flow shear stress activates signaling by PIEZO1 and integrins in endothelial cells"/>
</dbReference>
<dbReference type="PRO" id="PR:P20417"/>
<dbReference type="Proteomes" id="UP000002494">
    <property type="component" value="Chromosome 3"/>
</dbReference>
<dbReference type="Bgee" id="ENSRNOG00000010574">
    <property type="expression patterns" value="Expressed in spleen and 19 other cell types or tissues"/>
</dbReference>
<dbReference type="GO" id="GO:0005737">
    <property type="term" value="C:cytoplasm"/>
    <property type="evidence" value="ECO:0000266"/>
    <property type="project" value="RGD"/>
</dbReference>
<dbReference type="GO" id="GO:0098554">
    <property type="term" value="C:cytoplasmic side of endoplasmic reticulum membrane"/>
    <property type="evidence" value="ECO:0000266"/>
    <property type="project" value="RGD"/>
</dbReference>
<dbReference type="GO" id="GO:0005829">
    <property type="term" value="C:cytosol"/>
    <property type="evidence" value="ECO:0007669"/>
    <property type="project" value="Ensembl"/>
</dbReference>
<dbReference type="GO" id="GO:0005769">
    <property type="term" value="C:early endosome"/>
    <property type="evidence" value="ECO:0000250"/>
    <property type="project" value="UniProtKB"/>
</dbReference>
<dbReference type="GO" id="GO:0005783">
    <property type="term" value="C:endoplasmic reticulum"/>
    <property type="evidence" value="ECO:0000318"/>
    <property type="project" value="GO_Central"/>
</dbReference>
<dbReference type="GO" id="GO:0031904">
    <property type="term" value="C:endosome lumen"/>
    <property type="evidence" value="ECO:0000266"/>
    <property type="project" value="RGD"/>
</dbReference>
<dbReference type="GO" id="GO:0098978">
    <property type="term" value="C:glutamatergic synapse"/>
    <property type="evidence" value="ECO:0000314"/>
    <property type="project" value="SynGO"/>
</dbReference>
<dbReference type="GO" id="GO:0030061">
    <property type="term" value="C:mitochondrial crista"/>
    <property type="evidence" value="ECO:0000314"/>
    <property type="project" value="CACAO"/>
</dbReference>
<dbReference type="GO" id="GO:0005759">
    <property type="term" value="C:mitochondrial matrix"/>
    <property type="evidence" value="ECO:0000314"/>
    <property type="project" value="CACAO"/>
</dbReference>
<dbReference type="GO" id="GO:0005886">
    <property type="term" value="C:plasma membrane"/>
    <property type="evidence" value="ECO:0000266"/>
    <property type="project" value="RGD"/>
</dbReference>
<dbReference type="GO" id="GO:0098794">
    <property type="term" value="C:postsynapse"/>
    <property type="evidence" value="ECO:0000314"/>
    <property type="project" value="SynGO"/>
</dbReference>
<dbReference type="GO" id="GO:0032991">
    <property type="term" value="C:protein-containing complex"/>
    <property type="evidence" value="ECO:0000266"/>
    <property type="project" value="RGD"/>
</dbReference>
<dbReference type="GO" id="GO:0097443">
    <property type="term" value="C:sorting endosome"/>
    <property type="evidence" value="ECO:0000266"/>
    <property type="project" value="RGD"/>
</dbReference>
<dbReference type="GO" id="GO:0019899">
    <property type="term" value="F:enzyme binding"/>
    <property type="evidence" value="ECO:0000266"/>
    <property type="project" value="RGD"/>
</dbReference>
<dbReference type="GO" id="GO:0046875">
    <property type="term" value="F:ephrin receptor binding"/>
    <property type="evidence" value="ECO:0000266"/>
    <property type="project" value="RGD"/>
</dbReference>
<dbReference type="GO" id="GO:0005158">
    <property type="term" value="F:insulin receptor binding"/>
    <property type="evidence" value="ECO:0000314"/>
    <property type="project" value="RGD"/>
</dbReference>
<dbReference type="GO" id="GO:0004726">
    <property type="term" value="F:non-membrane spanning protein tyrosine phosphatase activity"/>
    <property type="evidence" value="ECO:0000318"/>
    <property type="project" value="GO_Central"/>
</dbReference>
<dbReference type="GO" id="GO:0016791">
    <property type="term" value="F:phosphatase activity"/>
    <property type="evidence" value="ECO:0000314"/>
    <property type="project" value="RGD"/>
</dbReference>
<dbReference type="GO" id="GO:0019901">
    <property type="term" value="F:protein kinase binding"/>
    <property type="evidence" value="ECO:0000266"/>
    <property type="project" value="RGD"/>
</dbReference>
<dbReference type="GO" id="GO:0051721">
    <property type="term" value="F:protein phosphatase 2A binding"/>
    <property type="evidence" value="ECO:0000353"/>
    <property type="project" value="RGD"/>
</dbReference>
<dbReference type="GO" id="GO:0004725">
    <property type="term" value="F:protein tyrosine phosphatase activity"/>
    <property type="evidence" value="ECO:0000314"/>
    <property type="project" value="RGD"/>
</dbReference>
<dbReference type="GO" id="GO:0030971">
    <property type="term" value="F:receptor tyrosine kinase binding"/>
    <property type="evidence" value="ECO:0000266"/>
    <property type="project" value="RGD"/>
</dbReference>
<dbReference type="GO" id="GO:0008270">
    <property type="term" value="F:zinc ion binding"/>
    <property type="evidence" value="ECO:0000266"/>
    <property type="project" value="RGD"/>
</dbReference>
<dbReference type="GO" id="GO:0030036">
    <property type="term" value="P:actin cytoskeleton organization"/>
    <property type="evidence" value="ECO:0000250"/>
    <property type="project" value="UniProtKB"/>
</dbReference>
<dbReference type="GO" id="GO:1904385">
    <property type="term" value="P:cellular response to angiotensin"/>
    <property type="evidence" value="ECO:0000270"/>
    <property type="project" value="RGD"/>
</dbReference>
<dbReference type="GO" id="GO:0044344">
    <property type="term" value="P:cellular response to fibroblast growth factor stimulus"/>
    <property type="evidence" value="ECO:0000270"/>
    <property type="project" value="RGD"/>
</dbReference>
<dbReference type="GO" id="GO:0071456">
    <property type="term" value="P:cellular response to hypoxia"/>
    <property type="evidence" value="ECO:0000270"/>
    <property type="project" value="RGD"/>
</dbReference>
<dbReference type="GO" id="GO:0032869">
    <property type="term" value="P:cellular response to insulin stimulus"/>
    <property type="evidence" value="ECO:0000270"/>
    <property type="project" value="RGD"/>
</dbReference>
<dbReference type="GO" id="GO:1990090">
    <property type="term" value="P:cellular response to nerve growth factor stimulus"/>
    <property type="evidence" value="ECO:0000315"/>
    <property type="project" value="RGD"/>
</dbReference>
<dbReference type="GO" id="GO:0071732">
    <property type="term" value="P:cellular response to nitric oxide"/>
    <property type="evidence" value="ECO:0000315"/>
    <property type="project" value="RGD"/>
</dbReference>
<dbReference type="GO" id="GO:0036120">
    <property type="term" value="P:cellular response to platelet-derived growth factor stimulus"/>
    <property type="evidence" value="ECO:0000270"/>
    <property type="project" value="RGD"/>
</dbReference>
<dbReference type="GO" id="GO:0030968">
    <property type="term" value="P:endoplasmic reticulum unfolded protein response"/>
    <property type="evidence" value="ECO:0000250"/>
    <property type="project" value="UniProtKB"/>
</dbReference>
<dbReference type="GO" id="GO:0038020">
    <property type="term" value="P:insulin receptor recycling"/>
    <property type="evidence" value="ECO:0000266"/>
    <property type="project" value="RGD"/>
</dbReference>
<dbReference type="GO" id="GO:0008286">
    <property type="term" value="P:insulin receptor signaling pathway"/>
    <property type="evidence" value="ECO:0000266"/>
    <property type="project" value="RGD"/>
</dbReference>
<dbReference type="GO" id="GO:0036498">
    <property type="term" value="P:IRE1-mediated unfolded protein response"/>
    <property type="evidence" value="ECO:0000266"/>
    <property type="project" value="RGD"/>
</dbReference>
<dbReference type="GO" id="GO:0008285">
    <property type="term" value="P:negative regulation of cell population proliferation"/>
    <property type="evidence" value="ECO:0000315"/>
    <property type="project" value="RGD"/>
</dbReference>
<dbReference type="GO" id="GO:0010812">
    <property type="term" value="P:negative regulation of cell-substrate adhesion"/>
    <property type="evidence" value="ECO:0000315"/>
    <property type="project" value="RGD"/>
</dbReference>
<dbReference type="GO" id="GO:1902236">
    <property type="term" value="P:negative regulation of endoplasmic reticulum stress-induced intrinsic apoptotic signaling pathway"/>
    <property type="evidence" value="ECO:0000266"/>
    <property type="project" value="RGD"/>
</dbReference>
<dbReference type="GO" id="GO:0070373">
    <property type="term" value="P:negative regulation of ERK1 and ERK2 cascade"/>
    <property type="evidence" value="ECO:0000266"/>
    <property type="project" value="RGD"/>
</dbReference>
<dbReference type="GO" id="GO:0010977">
    <property type="term" value="P:negative regulation of neuron projection development"/>
    <property type="evidence" value="ECO:0000315"/>
    <property type="project" value="RGD"/>
</dbReference>
<dbReference type="GO" id="GO:1903898">
    <property type="term" value="P:negative regulation of PERK-mediated unfolded protein response"/>
    <property type="evidence" value="ECO:0000266"/>
    <property type="project" value="RGD"/>
</dbReference>
<dbReference type="GO" id="GO:0051898">
    <property type="term" value="P:negative regulation of phosphatidylinositol 3-kinase/protein kinase B signal transduction"/>
    <property type="evidence" value="ECO:0000315"/>
    <property type="project" value="RGD"/>
</dbReference>
<dbReference type="GO" id="GO:1904753">
    <property type="term" value="P:negative regulation of vascular associated smooth muscle cell migration"/>
    <property type="evidence" value="ECO:0000315"/>
    <property type="project" value="RGD"/>
</dbReference>
<dbReference type="GO" id="GO:0030948">
    <property type="term" value="P:negative regulation of vascular endothelial growth factor receptor signaling pathway"/>
    <property type="evidence" value="ECO:0000266"/>
    <property type="project" value="RGD"/>
</dbReference>
<dbReference type="GO" id="GO:0035791">
    <property type="term" value="P:platelet-derived growth factor receptor-beta signaling pathway"/>
    <property type="evidence" value="ECO:0000266"/>
    <property type="project" value="RGD"/>
</dbReference>
<dbReference type="GO" id="GO:0010666">
    <property type="term" value="P:positive regulation of cardiac muscle cell apoptotic process"/>
    <property type="evidence" value="ECO:0000315"/>
    <property type="project" value="RGD"/>
</dbReference>
<dbReference type="GO" id="GO:2000353">
    <property type="term" value="P:positive regulation of endothelial cell apoptotic process"/>
    <property type="evidence" value="ECO:0000315"/>
    <property type="project" value="RGD"/>
</dbReference>
<dbReference type="GO" id="GO:0010460">
    <property type="term" value="P:positive regulation of heart rate"/>
    <property type="evidence" value="ECO:0000315"/>
    <property type="project" value="RGD"/>
</dbReference>
<dbReference type="GO" id="GO:2000646">
    <property type="term" value="P:positive regulation of receptor catabolic process"/>
    <property type="evidence" value="ECO:0000266"/>
    <property type="project" value="RGD"/>
</dbReference>
<dbReference type="GO" id="GO:0003084">
    <property type="term" value="P:positive regulation of systemic arterial blood pressure"/>
    <property type="evidence" value="ECO:0000315"/>
    <property type="project" value="RGD"/>
</dbReference>
<dbReference type="GO" id="GO:0030100">
    <property type="term" value="P:regulation of endocytosis"/>
    <property type="evidence" value="ECO:0000250"/>
    <property type="project" value="UniProtKB"/>
</dbReference>
<dbReference type="GO" id="GO:1902202">
    <property type="term" value="P:regulation of hepatocyte growth factor receptor signaling pathway"/>
    <property type="evidence" value="ECO:0000266"/>
    <property type="project" value="RGD"/>
</dbReference>
<dbReference type="GO" id="GO:0046626">
    <property type="term" value="P:regulation of insulin receptor signaling pathway"/>
    <property type="evidence" value="ECO:0000315"/>
    <property type="project" value="RGD"/>
</dbReference>
<dbReference type="GO" id="GO:0033157">
    <property type="term" value="P:regulation of intracellular protein transport"/>
    <property type="evidence" value="ECO:0000266"/>
    <property type="project" value="RGD"/>
</dbReference>
<dbReference type="GO" id="GO:0150052">
    <property type="term" value="P:regulation of postsynapse assembly"/>
    <property type="evidence" value="ECO:0000314"/>
    <property type="project" value="SynGO"/>
</dbReference>
<dbReference type="GO" id="GO:0030162">
    <property type="term" value="P:regulation of proteolysis"/>
    <property type="evidence" value="ECO:0000315"/>
    <property type="project" value="RGD"/>
</dbReference>
<dbReference type="GO" id="GO:0009966">
    <property type="term" value="P:regulation of signal transduction"/>
    <property type="evidence" value="ECO:0000250"/>
    <property type="project" value="UniProtKB"/>
</dbReference>
<dbReference type="GO" id="GO:1990776">
    <property type="term" value="P:response to angiotensin"/>
    <property type="evidence" value="ECO:0000270"/>
    <property type="project" value="RGD"/>
</dbReference>
<dbReference type="GO" id="GO:0034976">
    <property type="term" value="P:response to endoplasmic reticulum stress"/>
    <property type="evidence" value="ECO:0000266"/>
    <property type="project" value="RGD"/>
</dbReference>
<dbReference type="GO" id="GO:0031667">
    <property type="term" value="P:response to nutrient levels"/>
    <property type="evidence" value="ECO:0000270"/>
    <property type="project" value="RGD"/>
</dbReference>
<dbReference type="CDD" id="cd14608">
    <property type="entry name" value="PTPc-N1"/>
    <property type="match status" value="1"/>
</dbReference>
<dbReference type="FunFam" id="3.90.190.10:FF:000025">
    <property type="entry name" value="Tyrosine-protein phosphatase non-receptor type 1"/>
    <property type="match status" value="1"/>
</dbReference>
<dbReference type="Gene3D" id="3.90.190.10">
    <property type="entry name" value="Protein tyrosine phosphatase superfamily"/>
    <property type="match status" value="1"/>
</dbReference>
<dbReference type="InterPro" id="IPR051985">
    <property type="entry name" value="NR_tyrosine_phosphatase"/>
</dbReference>
<dbReference type="InterPro" id="IPR029021">
    <property type="entry name" value="Prot-tyrosine_phosphatase-like"/>
</dbReference>
<dbReference type="InterPro" id="IPR000242">
    <property type="entry name" value="PTP_cat"/>
</dbReference>
<dbReference type="InterPro" id="IPR012265">
    <property type="entry name" value="Ptpn1/Ptpn2"/>
</dbReference>
<dbReference type="InterPro" id="IPR016130">
    <property type="entry name" value="Tyr_Pase_AS"/>
</dbReference>
<dbReference type="InterPro" id="IPR003595">
    <property type="entry name" value="Tyr_Pase_cat"/>
</dbReference>
<dbReference type="InterPro" id="IPR000387">
    <property type="entry name" value="Tyr_Pase_dom"/>
</dbReference>
<dbReference type="PANTHER" id="PTHR46047:SF2">
    <property type="entry name" value="TYROSINE-PROTEIN PHOSPHATASE NON-RECEPTOR TYPE 1"/>
    <property type="match status" value="1"/>
</dbReference>
<dbReference type="PANTHER" id="PTHR46047">
    <property type="entry name" value="TYROSINE-PROTEIN PHOSPHATASE NON-RECEPTOR TYPE 61F"/>
    <property type="match status" value="1"/>
</dbReference>
<dbReference type="Pfam" id="PF00102">
    <property type="entry name" value="Y_phosphatase"/>
    <property type="match status" value="1"/>
</dbReference>
<dbReference type="PIRSF" id="PIRSF000926">
    <property type="entry name" value="Tyr-Ptase_nr1"/>
    <property type="match status" value="1"/>
</dbReference>
<dbReference type="PRINTS" id="PR00700">
    <property type="entry name" value="PRTYPHPHTASE"/>
</dbReference>
<dbReference type="SMART" id="SM00194">
    <property type="entry name" value="PTPc"/>
    <property type="match status" value="1"/>
</dbReference>
<dbReference type="SMART" id="SM00404">
    <property type="entry name" value="PTPc_motif"/>
    <property type="match status" value="1"/>
</dbReference>
<dbReference type="SUPFAM" id="SSF52799">
    <property type="entry name" value="(Phosphotyrosine protein) phosphatases II"/>
    <property type="match status" value="1"/>
</dbReference>
<dbReference type="PROSITE" id="PS00383">
    <property type="entry name" value="TYR_PHOSPHATASE_1"/>
    <property type="match status" value="1"/>
</dbReference>
<dbReference type="PROSITE" id="PS50056">
    <property type="entry name" value="TYR_PHOSPHATASE_2"/>
    <property type="match status" value="1"/>
</dbReference>
<dbReference type="PROSITE" id="PS50055">
    <property type="entry name" value="TYR_PHOSPHATASE_PTP"/>
    <property type="match status" value="1"/>
</dbReference>
<reference key="1">
    <citation type="journal article" date="1990" name="Proc. Natl. Acad. Sci. U.S.A.">
        <title>Cloning and expression of a protein-tyrosine-phosphatase.</title>
        <authorList>
            <person name="Guan K."/>
            <person name="Haun R.S."/>
            <person name="Watson S.J."/>
            <person name="Geahlen R.L."/>
            <person name="Dixon J.E."/>
        </authorList>
    </citation>
    <scope>NUCLEOTIDE SEQUENCE [MRNA]</scope>
    <source>
        <tissue>Brain</tissue>
    </source>
</reference>
<reference key="2">
    <citation type="journal article" date="2004" name="Genome Res.">
        <title>The status, quality, and expansion of the NIH full-length cDNA project: the Mammalian Gene Collection (MGC).</title>
        <authorList>
            <consortium name="The MGC Project Team"/>
        </authorList>
    </citation>
    <scope>NUCLEOTIDE SEQUENCE [LARGE SCALE MRNA]</scope>
    <source>
        <tissue>Testis</tissue>
    </source>
</reference>
<reference key="3">
    <citation type="journal article" date="1992" name="Biochem. J.">
        <title>Insulin receptor and epidermal growth factor receptor dephosphorylation by three major rat liver protein-tyrosine phosphatases expressed in a recombinant bacterial system.</title>
        <authorList>
            <person name="Hashimoto N."/>
            <person name="Zhang W.R."/>
            <person name="Goldstein B.J."/>
        </authorList>
    </citation>
    <scope>NUCLEOTIDE SEQUENCE [MRNA] OF 35-283</scope>
</reference>
<sequence length="432" mass="49674">MEMEKEFEQIDKAGNWAAIYQDIRHEASDFPCRIAKLPKNKNRNRYRDVSPFDHSRIKLHQEDNDYINASLIKMEEAQRSYILTQGPLPNTCGHFWEMVWEQKSRGVVMLNRIMEKGSLKCAQYWPQKEEKEMVFDDTNLKLTLISEDVKSYYTVRQLELENLATQEAREILHFHYTTWPDFGVPESPASFLNFLFKVRESGSLSPEHGPIVVHCSAGIGRSGTFCLADTCLLLMDKRKDPSSVDIKKVLLEMRRFRMGLIQTADQLRFSYLAVIEGAKFIMGDSSVQDQWKELSHEDLEPPPEHVPPPPRPPKRTLEPHNGKCKELFSNHQWVSEESCEDEDILAREESRAPSIAVHSMSSMSQDTEVRKRMVGGGLQSAQASVPTEEELSPTEEEQKAHRPVHWKPFLVNVCMATALATGAYLCYRVCFH</sequence>
<protein>
    <recommendedName>
        <fullName>Tyrosine-protein phosphatase non-receptor type 1</fullName>
        <ecNumber>3.1.3.48</ecNumber>
    </recommendedName>
    <alternativeName>
        <fullName>Protein-tyrosine phosphatase 1B</fullName>
        <shortName>PTP-1B</shortName>
    </alternativeName>
</protein>
<keyword id="KW-0007">Acetylation</keyword>
<keyword id="KW-0256">Endoplasmic reticulum</keyword>
<keyword id="KW-0378">Hydrolase</keyword>
<keyword id="KW-0472">Membrane</keyword>
<keyword id="KW-0597">Phosphoprotein</keyword>
<keyword id="KW-0904">Protein phosphatase</keyword>
<keyword id="KW-1185">Reference proteome</keyword>
<keyword id="KW-0702">S-nitrosylation</keyword>
<feature type="chain" id="PRO_0000094750" description="Tyrosine-protein phosphatase non-receptor type 1">
    <location>
        <begin position="1"/>
        <end position="432"/>
    </location>
</feature>
<feature type="domain" description="Tyrosine-protein phosphatase" evidence="4">
    <location>
        <begin position="3"/>
        <end position="277"/>
    </location>
</feature>
<feature type="region of interest" description="Disordered" evidence="6">
    <location>
        <begin position="297"/>
        <end position="322"/>
    </location>
</feature>
<feature type="region of interest" description="Disordered" evidence="6">
    <location>
        <begin position="350"/>
        <end position="402"/>
    </location>
</feature>
<feature type="active site" description="Phosphocysteine intermediate" evidence="4 5">
    <location>
        <position position="215"/>
    </location>
</feature>
<feature type="binding site" evidence="1">
    <location>
        <position position="181"/>
    </location>
    <ligand>
        <name>substrate</name>
    </ligand>
</feature>
<feature type="binding site" evidence="1">
    <location>
        <begin position="215"/>
        <end position="221"/>
    </location>
    <ligand>
        <name>substrate</name>
    </ligand>
</feature>
<feature type="binding site" evidence="1">
    <location>
        <position position="262"/>
    </location>
    <ligand>
        <name>substrate</name>
    </ligand>
</feature>
<feature type="modified residue" description="N-acetylmethionine" evidence="2">
    <location>
        <position position="1"/>
    </location>
</feature>
<feature type="modified residue" description="Phosphotyrosine" evidence="2">
    <location>
        <position position="20"/>
    </location>
</feature>
<feature type="modified residue" description="Phosphoserine; by PKB/AKT1, CLK1 and CLK2" evidence="2">
    <location>
        <position position="50"/>
    </location>
</feature>
<feature type="modified residue" description="Phosphotyrosine; by EGFR" evidence="2">
    <location>
        <position position="66"/>
    </location>
</feature>
<feature type="modified residue" description="Cysteine persulfide" evidence="1">
    <location>
        <position position="215"/>
    </location>
</feature>
<feature type="modified residue" description="S-nitrosocysteine; in reversibly inhibited form" evidence="2">
    <location>
        <position position="215"/>
    </location>
</feature>
<feature type="modified residue" description="Phosphoserine; by CLK1 and CLK2" evidence="2">
    <location>
        <position position="242"/>
    </location>
</feature>
<feature type="modified residue" description="Phosphoserine; by CLK1 and CLK2" evidence="2">
    <location>
        <position position="243"/>
    </location>
</feature>
<feature type="modified residue" description="Phosphoserine" evidence="3">
    <location>
        <position position="335"/>
    </location>
</feature>
<feature type="modified residue" description="Phosphoserine" evidence="2">
    <location>
        <position position="362"/>
    </location>
</feature>
<feature type="modified residue" description="Phosphoserine" evidence="2">
    <location>
        <position position="364"/>
    </location>
</feature>
<feature type="modified residue" description="Phosphothreonine" evidence="2">
    <location>
        <position position="367"/>
    </location>
</feature>
<organism>
    <name type="scientific">Rattus norvegicus</name>
    <name type="common">Rat</name>
    <dbReference type="NCBI Taxonomy" id="10116"/>
    <lineage>
        <taxon>Eukaryota</taxon>
        <taxon>Metazoa</taxon>
        <taxon>Chordata</taxon>
        <taxon>Craniata</taxon>
        <taxon>Vertebrata</taxon>
        <taxon>Euteleostomi</taxon>
        <taxon>Mammalia</taxon>
        <taxon>Eutheria</taxon>
        <taxon>Euarchontoglires</taxon>
        <taxon>Glires</taxon>
        <taxon>Rodentia</taxon>
        <taxon>Myomorpha</taxon>
        <taxon>Muroidea</taxon>
        <taxon>Muridae</taxon>
        <taxon>Murinae</taxon>
        <taxon>Rattus</taxon>
    </lineage>
</organism>
<accession>P20417</accession>
<gene>
    <name type="primary">Ptpn1</name>
</gene>
<proteinExistence type="evidence at protein level"/>
<evidence type="ECO:0000250" key="1"/>
<evidence type="ECO:0000250" key="2">
    <source>
        <dbReference type="UniProtKB" id="P18031"/>
    </source>
</evidence>
<evidence type="ECO:0000250" key="3">
    <source>
        <dbReference type="UniProtKB" id="P35821"/>
    </source>
</evidence>
<evidence type="ECO:0000255" key="4">
    <source>
        <dbReference type="PROSITE-ProRule" id="PRU00160"/>
    </source>
</evidence>
<evidence type="ECO:0000255" key="5">
    <source>
        <dbReference type="PROSITE-ProRule" id="PRU10044"/>
    </source>
</evidence>
<evidence type="ECO:0000256" key="6">
    <source>
        <dbReference type="SAM" id="MobiDB-lite"/>
    </source>
</evidence>
<evidence type="ECO:0000305" key="7"/>
<comment type="function">
    <text evidence="1">Tyrosine-protein phosphatase which acts as a regulator of endoplasmic reticulum unfolded protein response. Mediates dephosphorylation of EIF2AK3/PERK; inactivating the protein kinase activity of EIF2AK3/PERK. May play an important role in CKII- and p60c-src-induced signal transduction cascades. May regulate the EFNA5-EPHA3 signaling pathway which modulates cell reorganization and cell-cell repulsion. May also regulate the hepatocyte growth factor receptor signaling pathway through dephosphorylation of MET (By similarity).</text>
</comment>
<comment type="catalytic activity">
    <reaction evidence="5">
        <text>O-phospho-L-tyrosyl-[protein] + H2O = L-tyrosyl-[protein] + phosphate</text>
        <dbReference type="Rhea" id="RHEA:10684"/>
        <dbReference type="Rhea" id="RHEA-COMP:10136"/>
        <dbReference type="Rhea" id="RHEA-COMP:20101"/>
        <dbReference type="ChEBI" id="CHEBI:15377"/>
        <dbReference type="ChEBI" id="CHEBI:43474"/>
        <dbReference type="ChEBI" id="CHEBI:46858"/>
        <dbReference type="ChEBI" id="CHEBI:61978"/>
        <dbReference type="EC" id="3.1.3.48"/>
    </reaction>
</comment>
<comment type="subunit">
    <text evidence="2">Interacts with EPHA3 (phosphorylated); dephosphorylates EPHA3 and may regulate its trafficking and function. Interacts with MET. Interacts with NCK1.</text>
</comment>
<comment type="interaction">
    <interactant intactId="EBI-916819">
        <id>P20417</id>
    </interactant>
    <interactant intactId="EBI-297353">
        <id>P00533</id>
        <label>EGFR</label>
    </interactant>
    <organismsDiffer>true</organismsDiffer>
    <experiments>11</experiments>
</comment>
<comment type="subcellular location">
    <subcellularLocation>
        <location evidence="1">Endoplasmic reticulum membrane</location>
        <topology evidence="1">Peripheral membrane protein</topology>
        <orientation evidence="1">Cytoplasmic side</orientation>
    </subcellularLocation>
    <text evidence="1">Interacts with EPHA3 at the cell membrane.</text>
</comment>
<comment type="tissue specificity">
    <text>Found in several tissues including central nervous system, liver and kidney. A high level of expression was found in the hippocampus.</text>
</comment>
<comment type="PTM">
    <text evidence="1">Ser-50 is the major site of phosphorylation as compared to Ser-242 and Ser-243. Activated by phosphorylation at Ser-50 (By similarity).</text>
</comment>
<comment type="PTM">
    <text evidence="1">S-nitrosylation of Cys-215 inactivates the enzyme activity.</text>
</comment>
<comment type="PTM">
    <text evidence="1">Sulfhydration at Cys-215 following endoplasmic reticulum stress inactivates the enzyme activity, promoting EIF2AK3/PERK activity.</text>
</comment>
<comment type="similarity">
    <text evidence="7">Belongs to the protein-tyrosine phosphatase family. Non-receptor class 1 subfamily.</text>
</comment>